<accession>P76550</accession>
<sequence length="269" mass="29751">MSYEIKICDILKGAAMEGQYKGAQRGAKCEEIANELTRRGVKNNKGEVITKGGVSHWLEGRREPNFDTLAELCDMFGVYALMPMRGGKWIRVHPEDRGEMELREAVAERDAIIDDLKARIAELEAALANKQVPAEAEEMGGEKVEEVAAEQAPNDEKEMGAKEWVNPNPKKYSVGMLCQVLAAMGGEYLGNNAGLQQKITVLDNDGNRKPISNGAFYRLIEQAKGRGLISVEQEIKHKKDENGNQIGKGKKGDKLITLLPNWIDKLGDE</sequence>
<organism>
    <name type="scientific">Escherichia coli (strain K12)</name>
    <dbReference type="NCBI Taxonomy" id="83333"/>
    <lineage>
        <taxon>Bacteria</taxon>
        <taxon>Pseudomonadati</taxon>
        <taxon>Pseudomonadota</taxon>
        <taxon>Gammaproteobacteria</taxon>
        <taxon>Enterobacterales</taxon>
        <taxon>Enterobacteriaceae</taxon>
        <taxon>Escherichia</taxon>
    </lineage>
</organism>
<dbReference type="EMBL" id="U00096">
    <property type="protein sequence ID" value="AAC75503.2"/>
    <property type="molecule type" value="Genomic_DNA"/>
</dbReference>
<dbReference type="PIR" id="A65020">
    <property type="entry name" value="A65020"/>
</dbReference>
<dbReference type="RefSeq" id="NP_416945.2">
    <property type="nucleotide sequence ID" value="NC_000913.3"/>
</dbReference>
<dbReference type="RefSeq" id="WP_010723125.1">
    <property type="nucleotide sequence ID" value="NZ_JACEFS010000004.1"/>
</dbReference>
<dbReference type="DIP" id="DIP-12033N"/>
<dbReference type="FunCoup" id="P76550">
    <property type="interactions" value="30"/>
</dbReference>
<dbReference type="IntAct" id="P76550">
    <property type="interactions" value="6"/>
</dbReference>
<dbReference type="STRING" id="511145.b2450"/>
<dbReference type="jPOST" id="P76550"/>
<dbReference type="PaxDb" id="511145-b2450"/>
<dbReference type="EnsemblBacteria" id="AAC75503">
    <property type="protein sequence ID" value="AAC75503"/>
    <property type="gene ID" value="b2450"/>
</dbReference>
<dbReference type="GeneID" id="946932"/>
<dbReference type="KEGG" id="eco:b2450"/>
<dbReference type="KEGG" id="ecoc:C3026_13600"/>
<dbReference type="PATRIC" id="fig|511145.12.peg.2543"/>
<dbReference type="EchoBASE" id="EB3932"/>
<dbReference type="InParanoid" id="P76550"/>
<dbReference type="OMA" id="AKKWINP"/>
<dbReference type="OrthoDB" id="9791537at2"/>
<dbReference type="BioCyc" id="EcoCyc:G7280-MONOMER"/>
<dbReference type="PRO" id="PR:P76550"/>
<dbReference type="Proteomes" id="UP000000625">
    <property type="component" value="Chromosome"/>
</dbReference>
<dbReference type="GO" id="GO:0005829">
    <property type="term" value="C:cytosol"/>
    <property type="evidence" value="ECO:0000314"/>
    <property type="project" value="EcoCyc"/>
</dbReference>
<dbReference type="GO" id="GO:0003677">
    <property type="term" value="F:DNA binding"/>
    <property type="evidence" value="ECO:0007669"/>
    <property type="project" value="InterPro"/>
</dbReference>
<dbReference type="CDD" id="cd00093">
    <property type="entry name" value="HTH_XRE"/>
    <property type="match status" value="1"/>
</dbReference>
<dbReference type="Gene3D" id="1.10.260.40">
    <property type="entry name" value="lambda repressor-like DNA-binding domains"/>
    <property type="match status" value="1"/>
</dbReference>
<dbReference type="InterPro" id="IPR001387">
    <property type="entry name" value="Cro/C1-type_HTH"/>
</dbReference>
<dbReference type="InterPro" id="IPR010982">
    <property type="entry name" value="Lambda_DNA-bd_dom_sf"/>
</dbReference>
<keyword id="KW-1185">Reference proteome</keyword>
<gene>
    <name type="primary">yffS</name>
    <name type="ordered locus">b2450</name>
</gene>
<name>YFFS_ECOLI</name>
<reference key="1">
    <citation type="journal article" date="1997" name="Science">
        <title>The complete genome sequence of Escherichia coli K-12.</title>
        <authorList>
            <person name="Blattner F.R."/>
            <person name="Plunkett G. III"/>
            <person name="Bloch C.A."/>
            <person name="Perna N.T."/>
            <person name="Burland V."/>
            <person name="Riley M."/>
            <person name="Collado-Vides J."/>
            <person name="Glasner J.D."/>
            <person name="Rode C.K."/>
            <person name="Mayhew G.F."/>
            <person name="Gregor J."/>
            <person name="Davis N.W."/>
            <person name="Kirkpatrick H.A."/>
            <person name="Goeden M.A."/>
            <person name="Rose D.J."/>
            <person name="Mau B."/>
            <person name="Shao Y."/>
        </authorList>
    </citation>
    <scope>NUCLEOTIDE SEQUENCE [LARGE SCALE GENOMIC DNA]</scope>
    <source>
        <strain>K12 / MG1655 / ATCC 47076</strain>
    </source>
</reference>
<protein>
    <recommendedName>
        <fullName>Uncharacterized protein YffS</fullName>
    </recommendedName>
</protein>
<feature type="chain" id="PRO_0000169238" description="Uncharacterized protein YffS">
    <location>
        <begin position="1"/>
        <end position="269"/>
    </location>
</feature>
<proteinExistence type="predicted"/>